<comment type="function">
    <text evidence="1">One of the primary rRNA binding proteins, it binds directly to 16S rRNA central domain where it helps coordinate assembly of the platform of the 30S subunit.</text>
</comment>
<comment type="subunit">
    <text evidence="1">Part of the 30S ribosomal subunit.</text>
</comment>
<comment type="subcellular location">
    <subcellularLocation>
        <location>Plastid</location>
        <location>Chloroplast</location>
    </subcellularLocation>
</comment>
<comment type="similarity">
    <text evidence="2">Belongs to the universal ribosomal protein uS8 family.</text>
</comment>
<proteinExistence type="inferred from homology"/>
<keyword id="KW-0150">Chloroplast</keyword>
<keyword id="KW-0934">Plastid</keyword>
<keyword id="KW-0687">Ribonucleoprotein</keyword>
<keyword id="KW-0689">Ribosomal protein</keyword>
<keyword id="KW-0694">RNA-binding</keyword>
<keyword id="KW-0699">rRNA-binding</keyword>
<dbReference type="EMBL" id="DQ995192">
    <property type="protein sequence ID" value="ABJ91307.1"/>
    <property type="molecule type" value="Genomic_DNA"/>
</dbReference>
<dbReference type="EMBL" id="AP006715">
    <property type="protein sequence ID" value="BAE92424.1"/>
    <property type="molecule type" value="Genomic_DNA"/>
</dbReference>
<dbReference type="RefSeq" id="YP_536981.1">
    <property type="nucleotide sequence ID" value="NC_007932.1"/>
</dbReference>
<dbReference type="SMR" id="Q1XDI7"/>
<dbReference type="GeneID" id="3978855"/>
<dbReference type="GO" id="GO:0009507">
    <property type="term" value="C:chloroplast"/>
    <property type="evidence" value="ECO:0007669"/>
    <property type="project" value="UniProtKB-SubCell"/>
</dbReference>
<dbReference type="GO" id="GO:1990904">
    <property type="term" value="C:ribonucleoprotein complex"/>
    <property type="evidence" value="ECO:0007669"/>
    <property type="project" value="UniProtKB-KW"/>
</dbReference>
<dbReference type="GO" id="GO:0005840">
    <property type="term" value="C:ribosome"/>
    <property type="evidence" value="ECO:0007669"/>
    <property type="project" value="UniProtKB-KW"/>
</dbReference>
<dbReference type="GO" id="GO:0019843">
    <property type="term" value="F:rRNA binding"/>
    <property type="evidence" value="ECO:0007669"/>
    <property type="project" value="UniProtKB-UniRule"/>
</dbReference>
<dbReference type="GO" id="GO:0003735">
    <property type="term" value="F:structural constituent of ribosome"/>
    <property type="evidence" value="ECO:0007669"/>
    <property type="project" value="InterPro"/>
</dbReference>
<dbReference type="GO" id="GO:0006412">
    <property type="term" value="P:translation"/>
    <property type="evidence" value="ECO:0007669"/>
    <property type="project" value="UniProtKB-UniRule"/>
</dbReference>
<dbReference type="FunFam" id="3.30.1370.30:FF:000002">
    <property type="entry name" value="30S ribosomal protein S8"/>
    <property type="match status" value="1"/>
</dbReference>
<dbReference type="FunFam" id="3.30.1490.10:FF:000001">
    <property type="entry name" value="30S ribosomal protein S8"/>
    <property type="match status" value="1"/>
</dbReference>
<dbReference type="Gene3D" id="3.30.1370.30">
    <property type="match status" value="1"/>
</dbReference>
<dbReference type="Gene3D" id="3.30.1490.10">
    <property type="match status" value="1"/>
</dbReference>
<dbReference type="HAMAP" id="MF_01302_B">
    <property type="entry name" value="Ribosomal_uS8_B"/>
    <property type="match status" value="1"/>
</dbReference>
<dbReference type="InterPro" id="IPR000630">
    <property type="entry name" value="Ribosomal_uS8"/>
</dbReference>
<dbReference type="InterPro" id="IPR047863">
    <property type="entry name" value="Ribosomal_uS8_CS"/>
</dbReference>
<dbReference type="InterPro" id="IPR035987">
    <property type="entry name" value="Ribosomal_uS8_sf"/>
</dbReference>
<dbReference type="NCBIfam" id="NF001109">
    <property type="entry name" value="PRK00136.1"/>
    <property type="match status" value="1"/>
</dbReference>
<dbReference type="PANTHER" id="PTHR11758">
    <property type="entry name" value="40S RIBOSOMAL PROTEIN S15A"/>
    <property type="match status" value="1"/>
</dbReference>
<dbReference type="Pfam" id="PF00410">
    <property type="entry name" value="Ribosomal_S8"/>
    <property type="match status" value="1"/>
</dbReference>
<dbReference type="SUPFAM" id="SSF56047">
    <property type="entry name" value="Ribosomal protein S8"/>
    <property type="match status" value="1"/>
</dbReference>
<dbReference type="PROSITE" id="PS00053">
    <property type="entry name" value="RIBOSOMAL_S8"/>
    <property type="match status" value="1"/>
</dbReference>
<protein>
    <recommendedName>
        <fullName evidence="2">Small ribosomal subunit protein uS8c</fullName>
    </recommendedName>
    <alternativeName>
        <fullName>30S ribosomal protein S8, chloroplastic</fullName>
    </alternativeName>
</protein>
<sequence length="133" mass="14844">MVVNDTIADMLTRIRNANLARHQIVQVPATKMTCNMATVLKEEGFVQNFEQMGEGIETHLMISLKYNGKNRQPVITALKRISKPGLRVYANHKELPRVLGGLGIALISTSRGVMTDRQARHDGLGGEILCYIW</sequence>
<evidence type="ECO:0000250" key="1"/>
<evidence type="ECO:0000305" key="2"/>
<geneLocation type="chloroplast"/>
<gene>
    <name type="primary">rps8</name>
</gene>
<feature type="chain" id="PRO_0000276735" description="Small ribosomal subunit protein uS8c">
    <location>
        <begin position="1"/>
        <end position="133"/>
    </location>
</feature>
<accession>Q1XDI7</accession>
<reference key="1">
    <citation type="submission" date="2006-09" db="EMBL/GenBank/DDBJ databases">
        <title>Cloning and analysis of the Porphyra yezoensis gene for rps8.</title>
        <authorList>
            <person name="Wang M.Q."/>
            <person name="Mao Y.X."/>
        </authorList>
    </citation>
    <scope>NUCLEOTIDE SEQUENCE [GENOMIC DNA]</scope>
    <source>
        <strain>Qingdao</strain>
    </source>
</reference>
<reference key="2">
    <citation type="submission" date="2003-11" db="EMBL/GenBank/DDBJ databases">
        <title>Whole genome sequence of Porphyra yezoensis chloroplast.</title>
        <authorList>
            <person name="Kunimoto M."/>
            <person name="Morishima K."/>
            <person name="Yoshikawa M."/>
            <person name="Fukuda S."/>
            <person name="Kobayashi T."/>
            <person name="Kobayashi M."/>
            <person name="Okazaki T."/>
            <person name="Ohara I."/>
            <person name="Nakayama I."/>
        </authorList>
    </citation>
    <scope>NUCLEOTIDE SEQUENCE [LARGE SCALE GENOMIC DNA]</scope>
    <source>
        <strain>U-51</strain>
    </source>
</reference>
<organism>
    <name type="scientific">Pyropia yezoensis</name>
    <name type="common">Susabi-nori</name>
    <name type="synonym">Porphyra yezoensis</name>
    <dbReference type="NCBI Taxonomy" id="2788"/>
    <lineage>
        <taxon>Eukaryota</taxon>
        <taxon>Rhodophyta</taxon>
        <taxon>Bangiophyceae</taxon>
        <taxon>Bangiales</taxon>
        <taxon>Bangiaceae</taxon>
        <taxon>Pyropia</taxon>
    </lineage>
</organism>
<name>RR8_PYRYE</name>